<organism>
    <name type="scientific">Rattus norvegicus</name>
    <name type="common">Rat</name>
    <dbReference type="NCBI Taxonomy" id="10116"/>
    <lineage>
        <taxon>Eukaryota</taxon>
        <taxon>Metazoa</taxon>
        <taxon>Chordata</taxon>
        <taxon>Craniata</taxon>
        <taxon>Vertebrata</taxon>
        <taxon>Euteleostomi</taxon>
        <taxon>Mammalia</taxon>
        <taxon>Eutheria</taxon>
        <taxon>Euarchontoglires</taxon>
        <taxon>Glires</taxon>
        <taxon>Rodentia</taxon>
        <taxon>Myomorpha</taxon>
        <taxon>Muroidea</taxon>
        <taxon>Muridae</taxon>
        <taxon>Murinae</taxon>
        <taxon>Rattus</taxon>
    </lineage>
</organism>
<gene>
    <name type="primary">Pard6a</name>
    <name type="synonym">Par-6a</name>
    <name type="synonym">Par6a</name>
</gene>
<accession>Q6B4M5</accession>
<accession>Q4U4X0</accession>
<accession>Q6B4M6</accession>
<evidence type="ECO:0000250" key="1"/>
<evidence type="ECO:0000250" key="2">
    <source>
        <dbReference type="UniProtKB" id="Q9NPB6"/>
    </source>
</evidence>
<evidence type="ECO:0000250" key="3">
    <source>
        <dbReference type="UniProtKB" id="Q9Z101"/>
    </source>
</evidence>
<evidence type="ECO:0000255" key="4">
    <source>
        <dbReference type="PROSITE-ProRule" id="PRU00143"/>
    </source>
</evidence>
<evidence type="ECO:0000255" key="5">
    <source>
        <dbReference type="PROSITE-ProRule" id="PRU01081"/>
    </source>
</evidence>
<evidence type="ECO:0000256" key="6">
    <source>
        <dbReference type="SAM" id="MobiDB-lite"/>
    </source>
</evidence>
<evidence type="ECO:0000303" key="7">
    <source ref="1"/>
</evidence>
<evidence type="ECO:0000305" key="8"/>
<evidence type="ECO:0007744" key="9">
    <source>
    </source>
</evidence>
<proteinExistence type="evidence at protein level"/>
<keyword id="KW-0025">Alternative splicing</keyword>
<keyword id="KW-0131">Cell cycle</keyword>
<keyword id="KW-0132">Cell division</keyword>
<keyword id="KW-0965">Cell junction</keyword>
<keyword id="KW-1003">Cell membrane</keyword>
<keyword id="KW-0963">Cytoplasm</keyword>
<keyword id="KW-0206">Cytoskeleton</keyword>
<keyword id="KW-0472">Membrane</keyword>
<keyword id="KW-0597">Phosphoprotein</keyword>
<keyword id="KW-1185">Reference proteome</keyword>
<keyword id="KW-0796">Tight junction</keyword>
<keyword id="KW-0832">Ubl conjugation</keyword>
<comment type="function">
    <text evidence="2 3">Adapter protein involved in asymmetrical cell division and cell polarization processes. Probably involved in the formation of epithelial tight junctions. Association with PARD3 may prevent the interaction of PARD3 with F11R/JAM1, thereby preventing tight junction assembly. The PARD6-PARD3 complex links GTP-bound Rho small GTPases to atypical protein kinase C proteins. Regulates centrosome organization and function. Essential for the centrosomal recruitment of key proteins that control centrosomal microtubule organization.</text>
</comment>
<comment type="subunit">
    <text evidence="2 3">Interacts with PALS1 and CRB3. Interacts with PARD3. Interacts with GTP-bound forms of CDC42, RHOQ/TC10 and RAC1. Interacts with the N-terminal part of PRKCI and PRKCZ. Part of a complex with PARD3, CDC42 or RAC1 and PRKCI or PRKCZ. Part of a complex with LLGL1 and PRKCI. Interacts with MAP2K5. Interacts with TGFBR1; involved in TGF-beta induced epithelial to mesenchymal transition. Interacts with ECT2 ('Thr-359' phosphorylated form) and PRKCI. Interacts with DCTN1 and PCM1.</text>
</comment>
<comment type="subcellular location">
    <subcellularLocation>
        <location evidence="1">Cytoplasm</location>
    </subcellularLocation>
    <subcellularLocation>
        <location evidence="1">Cell membrane</location>
    </subcellularLocation>
    <subcellularLocation>
        <location evidence="1">Cell junction</location>
        <location evidence="1">Tight junction</location>
    </subcellularLocation>
    <subcellularLocation>
        <location evidence="2">Cytoplasm</location>
        <location evidence="2">Cytoskeleton</location>
        <location evidence="2">Microtubule organizing center</location>
        <location evidence="2">Centrosome</location>
        <location evidence="2">Centriolar satellite</location>
    </subcellularLocation>
    <subcellularLocation>
        <location evidence="2">Cytoplasm</location>
        <location evidence="2">Cytoskeleton</location>
        <location evidence="2">Microtubule organizing center</location>
        <location evidence="2">Centrosome</location>
    </subcellularLocation>
    <text evidence="2">Colocalizes with GTP-bound CDC42 or RAC1 at membrane ruffles and with PARD3 at epithelial tight junctions. Recruited to the centrosome by a microtubule and dynein-dynactin-dependent mechanism.</text>
</comment>
<comment type="alternative products">
    <event type="alternative splicing"/>
    <isoform>
        <id>Q6B4M5-1</id>
        <name>1</name>
        <sequence type="displayed"/>
    </isoform>
    <isoform>
        <id>Q6B4M5-2</id>
        <name>2</name>
        <sequence type="described" ref="VSP_015769"/>
    </isoform>
    <isoform>
        <id>Q6B4M5-3</id>
        <name>3</name>
        <name>Short</name>
        <sequence type="described" ref="VSP_015768"/>
    </isoform>
</comment>
<comment type="domain">
    <text evidence="1">The PB1 domain mediates interactions with MAP2K5.</text>
</comment>
<comment type="domain">
    <text evidence="1">The pseudo-CRIB domain together with the PDZ domain is required for the interaction with Rho small GTPases.</text>
</comment>
<comment type="domain">
    <text evidence="1">The PDZ domain mediates interaction with CRB3.</text>
</comment>
<comment type="PTM">
    <text evidence="3">Phosphorylated by the TGF-beta receptor.</text>
</comment>
<comment type="PTM">
    <text evidence="2">Ubiquitinated by the SCF(FBXO31) complex, leading to its proteasomal degradation.</text>
</comment>
<comment type="similarity">
    <text evidence="8">Belongs to the PAR6 family.</text>
</comment>
<name>PAR6A_RAT</name>
<protein>
    <recommendedName>
        <fullName>Partitioning defective 6 homolog alpha</fullName>
        <shortName>PAR-6</shortName>
        <shortName>PAR-6 alpha</shortName>
        <shortName>PAR-6A</shortName>
    </recommendedName>
</protein>
<dbReference type="EMBL" id="AY682586">
    <property type="protein sequence ID" value="AAT80897.1"/>
    <property type="molecule type" value="mRNA"/>
</dbReference>
<dbReference type="EMBL" id="AY682587">
    <property type="protein sequence ID" value="AAT80898.1"/>
    <property type="molecule type" value="mRNA"/>
</dbReference>
<dbReference type="EMBL" id="DQ011518">
    <property type="protein sequence ID" value="AAY32917.1"/>
    <property type="molecule type" value="mRNA"/>
</dbReference>
<dbReference type="SMR" id="Q6B4M5"/>
<dbReference type="BioGRID" id="258812">
    <property type="interactions" value="2"/>
</dbReference>
<dbReference type="CORUM" id="Q6B4M5"/>
<dbReference type="DIP" id="DIP-46160N"/>
<dbReference type="FunCoup" id="Q6B4M5">
    <property type="interactions" value="970"/>
</dbReference>
<dbReference type="IntAct" id="Q6B4M5">
    <property type="interactions" value="2"/>
</dbReference>
<dbReference type="STRING" id="10116.ENSRNOP00000069044"/>
<dbReference type="GlyGen" id="Q6B4M5">
    <property type="glycosylation" value="1 site"/>
</dbReference>
<dbReference type="iPTMnet" id="Q6B4M5"/>
<dbReference type="PhosphoSitePlus" id="Q6B4M5"/>
<dbReference type="PaxDb" id="10116-ENSRNOP00000043456"/>
<dbReference type="AGR" id="RGD:1303273"/>
<dbReference type="RGD" id="1303273">
    <property type="gene designation" value="Pard6a"/>
</dbReference>
<dbReference type="eggNOG" id="KOG3606">
    <property type="taxonomic scope" value="Eukaryota"/>
</dbReference>
<dbReference type="InParanoid" id="Q6B4M5"/>
<dbReference type="PhylomeDB" id="Q6B4M5"/>
<dbReference type="Reactome" id="R-RNO-2173791">
    <property type="pathway name" value="TGF-beta receptor signaling in EMT (epithelial to mesenchymal transition)"/>
</dbReference>
<dbReference type="Reactome" id="R-RNO-420029">
    <property type="pathway name" value="Tight junction interactions"/>
</dbReference>
<dbReference type="Reactome" id="R-RNO-4608870">
    <property type="pathway name" value="Asymmetric localization of PCP proteins"/>
</dbReference>
<dbReference type="Reactome" id="R-RNO-9013149">
    <property type="pathway name" value="RAC1 GTPase cycle"/>
</dbReference>
<dbReference type="Reactome" id="R-RNO-9013420">
    <property type="pathway name" value="RHOU GTPase cycle"/>
</dbReference>
<dbReference type="Reactome" id="R-RNO-9013424">
    <property type="pathway name" value="RHOV GTPase cycle"/>
</dbReference>
<dbReference type="PRO" id="PR:Q6B4M5"/>
<dbReference type="Proteomes" id="UP000002494">
    <property type="component" value="Unplaced"/>
</dbReference>
<dbReference type="GO" id="GO:0016324">
    <property type="term" value="C:apical plasma membrane"/>
    <property type="evidence" value="ECO:0000318"/>
    <property type="project" value="GO_Central"/>
</dbReference>
<dbReference type="GO" id="GO:0044295">
    <property type="term" value="C:axonal growth cone"/>
    <property type="evidence" value="ECO:0000314"/>
    <property type="project" value="RGD"/>
</dbReference>
<dbReference type="GO" id="GO:0005923">
    <property type="term" value="C:bicellular tight junction"/>
    <property type="evidence" value="ECO:0000266"/>
    <property type="project" value="RGD"/>
</dbReference>
<dbReference type="GO" id="GO:0005938">
    <property type="term" value="C:cell cortex"/>
    <property type="evidence" value="ECO:0000266"/>
    <property type="project" value="RGD"/>
</dbReference>
<dbReference type="GO" id="GO:0034451">
    <property type="term" value="C:centriolar satellite"/>
    <property type="evidence" value="ECO:0000250"/>
    <property type="project" value="UniProtKB"/>
</dbReference>
<dbReference type="GO" id="GO:0005813">
    <property type="term" value="C:centrosome"/>
    <property type="evidence" value="ECO:0000250"/>
    <property type="project" value="UniProtKB"/>
</dbReference>
<dbReference type="GO" id="GO:0005737">
    <property type="term" value="C:cytoplasm"/>
    <property type="evidence" value="ECO:0000266"/>
    <property type="project" value="RGD"/>
</dbReference>
<dbReference type="GO" id="GO:0043025">
    <property type="term" value="C:neuronal cell body"/>
    <property type="evidence" value="ECO:0000314"/>
    <property type="project" value="RGD"/>
</dbReference>
<dbReference type="GO" id="GO:0005634">
    <property type="term" value="C:nucleus"/>
    <property type="evidence" value="ECO:0000266"/>
    <property type="project" value="RGD"/>
</dbReference>
<dbReference type="GO" id="GO:0120157">
    <property type="term" value="C:PAR polarity complex"/>
    <property type="evidence" value="ECO:0000266"/>
    <property type="project" value="RGD"/>
</dbReference>
<dbReference type="GO" id="GO:0032991">
    <property type="term" value="C:protein-containing complex"/>
    <property type="evidence" value="ECO:0000314"/>
    <property type="project" value="RGD"/>
</dbReference>
<dbReference type="GO" id="GO:0030742">
    <property type="term" value="F:GTP-dependent protein binding"/>
    <property type="evidence" value="ECO:0000266"/>
    <property type="project" value="RGD"/>
</dbReference>
<dbReference type="GO" id="GO:0031267">
    <property type="term" value="F:small GTPase binding"/>
    <property type="evidence" value="ECO:0000266"/>
    <property type="project" value="RGD"/>
</dbReference>
<dbReference type="GO" id="GO:0051301">
    <property type="term" value="P:cell division"/>
    <property type="evidence" value="ECO:0007669"/>
    <property type="project" value="UniProtKB-KW"/>
</dbReference>
<dbReference type="GO" id="GO:0045217">
    <property type="term" value="P:cell-cell junction maintenance"/>
    <property type="evidence" value="ECO:0000266"/>
    <property type="project" value="RGD"/>
</dbReference>
<dbReference type="GO" id="GO:0007098">
    <property type="term" value="P:centrosome cycle"/>
    <property type="evidence" value="ECO:0000250"/>
    <property type="project" value="UniProtKB"/>
</dbReference>
<dbReference type="GO" id="GO:0007163">
    <property type="term" value="P:establishment or maintenance of cell polarity"/>
    <property type="evidence" value="ECO:0000318"/>
    <property type="project" value="GO_Central"/>
</dbReference>
<dbReference type="GO" id="GO:0045197">
    <property type="term" value="P:establishment or maintenance of epithelial cell apical/basal polarity"/>
    <property type="evidence" value="ECO:0000266"/>
    <property type="project" value="RGD"/>
</dbReference>
<dbReference type="GO" id="GO:1904781">
    <property type="term" value="P:positive regulation of protein localization to centrosome"/>
    <property type="evidence" value="ECO:0000250"/>
    <property type="project" value="UniProtKB"/>
</dbReference>
<dbReference type="GO" id="GO:0050714">
    <property type="term" value="P:positive regulation of protein secretion"/>
    <property type="evidence" value="ECO:0000266"/>
    <property type="project" value="RGD"/>
</dbReference>
<dbReference type="GO" id="GO:0060341">
    <property type="term" value="P:regulation of cellular localization"/>
    <property type="evidence" value="ECO:0000315"/>
    <property type="project" value="RGD"/>
</dbReference>
<dbReference type="CDD" id="cd06403">
    <property type="entry name" value="PB1_Par6"/>
    <property type="match status" value="1"/>
</dbReference>
<dbReference type="CDD" id="cd06718">
    <property type="entry name" value="PDZ_Par6-like"/>
    <property type="match status" value="1"/>
</dbReference>
<dbReference type="FunFam" id="3.10.20.90:FF:000031">
    <property type="entry name" value="Partitioning defective 6 homolog alpha"/>
    <property type="match status" value="1"/>
</dbReference>
<dbReference type="FunFam" id="2.30.42.10:FF:000030">
    <property type="entry name" value="Partitioning defective 6 homolog beta"/>
    <property type="match status" value="1"/>
</dbReference>
<dbReference type="Gene3D" id="2.30.42.10">
    <property type="match status" value="1"/>
</dbReference>
<dbReference type="Gene3D" id="3.10.20.90">
    <property type="entry name" value="Phosphatidylinositol 3-kinase Catalytic Subunit, Chain A, domain 1"/>
    <property type="match status" value="1"/>
</dbReference>
<dbReference type="InterPro" id="IPR051741">
    <property type="entry name" value="PAR6_homolog"/>
</dbReference>
<dbReference type="InterPro" id="IPR053793">
    <property type="entry name" value="PB1-like"/>
</dbReference>
<dbReference type="InterPro" id="IPR000270">
    <property type="entry name" value="PB1_dom"/>
</dbReference>
<dbReference type="InterPro" id="IPR034868">
    <property type="entry name" value="PB1_Par6"/>
</dbReference>
<dbReference type="InterPro" id="IPR001478">
    <property type="entry name" value="PDZ"/>
</dbReference>
<dbReference type="InterPro" id="IPR036034">
    <property type="entry name" value="PDZ_sf"/>
</dbReference>
<dbReference type="PANTHER" id="PTHR14102">
    <property type="entry name" value="PAR-6-RELATED"/>
    <property type="match status" value="1"/>
</dbReference>
<dbReference type="PANTHER" id="PTHR14102:SF9">
    <property type="entry name" value="PARTITIONING DEFECTIVE 6 HOMOLOG ALPHA"/>
    <property type="match status" value="1"/>
</dbReference>
<dbReference type="Pfam" id="PF00564">
    <property type="entry name" value="PB1"/>
    <property type="match status" value="1"/>
</dbReference>
<dbReference type="Pfam" id="PF00595">
    <property type="entry name" value="PDZ"/>
    <property type="match status" value="1"/>
</dbReference>
<dbReference type="SMART" id="SM00666">
    <property type="entry name" value="PB1"/>
    <property type="match status" value="1"/>
</dbReference>
<dbReference type="SMART" id="SM00228">
    <property type="entry name" value="PDZ"/>
    <property type="match status" value="1"/>
</dbReference>
<dbReference type="SUPFAM" id="SSF54277">
    <property type="entry name" value="CAD &amp; PB1 domains"/>
    <property type="match status" value="1"/>
</dbReference>
<dbReference type="SUPFAM" id="SSF50156">
    <property type="entry name" value="PDZ domain-like"/>
    <property type="match status" value="1"/>
</dbReference>
<dbReference type="PROSITE" id="PS51745">
    <property type="entry name" value="PB1"/>
    <property type="match status" value="1"/>
</dbReference>
<dbReference type="PROSITE" id="PS50106">
    <property type="entry name" value="PDZ"/>
    <property type="match status" value="1"/>
</dbReference>
<sequence>MARPQRTPARSPDSIVEVKSKFDAEFRRFALPRTSVRGFQEFSRLLCVVHQIPGLDVLLGYTDAHGDLLPLTNDDSLHRALASGPPPLRLLVQKRAEGDSSGLAFASNSLQRRKKGLLLRPVAPLRTRPPLLISLPQDFRQVSSVIDVDLLPETHRRVRLHKHGSDRPLGFYIRDGMSVRVAPQGLERVPGIFISRLVRGGLAESTGLLAVSDEILEVNGIEVAGKTLDQVTDMMVANSHNLIVTVKPANQRNNVVRGASGRLTGPSSVGPGPTDPDSDDDNSDPVIENRHPPCSNGLSQGPLCWDLQPGCLHPSAGSSLPSLDSREQANSGWGNGMRGDVSGFSL</sequence>
<reference key="1">
    <citation type="submission" date="2004-07" db="EMBL/GenBank/DDBJ databases">
        <title>Identification of the PAR-aPKC complex in hepatic cells: Identification of a PAR6 splice variant with a dominant negative phenotype.</title>
        <authorList>
            <person name="Braiterman L.T."/>
            <person name="Olin J.C."/>
            <person name="Sharma A."/>
            <person name="McNickle A."/>
            <person name="Chen Y.-H."/>
            <person name="Yamanaka T."/>
            <person name="Hubbard A.L."/>
        </authorList>
    </citation>
    <scope>NUCLEOTIDE SEQUENCE [MRNA] (ISOFORMS 2 AND 3)</scope>
    <source>
        <strain>CD Charles River</strain>
        <tissue>Hepatocyte</tissue>
    </source>
</reference>
<reference key="2">
    <citation type="submission" date="2005-04" db="EMBL/GenBank/DDBJ databases">
        <authorList>
            <person name="Liu X.J."/>
            <person name="He A.B."/>
            <person name="Zuo J."/>
            <person name="Fang F.D."/>
            <person name="Meng Y."/>
        </authorList>
    </citation>
    <scope>NUCLEOTIDE SEQUENCE [MRNA] (ISOFORM 1)</scope>
    <source>
        <tissue>Skeletal muscle</tissue>
    </source>
</reference>
<reference key="3">
    <citation type="journal article" date="2012" name="Nat. Commun.">
        <title>Quantitative maps of protein phosphorylation sites across 14 different rat organs and tissues.</title>
        <authorList>
            <person name="Lundby A."/>
            <person name="Secher A."/>
            <person name="Lage K."/>
            <person name="Nordsborg N.B."/>
            <person name="Dmytriyev A."/>
            <person name="Lundby C."/>
            <person name="Olsen J.V."/>
        </authorList>
    </citation>
    <scope>PHOSPHORYLATION [LARGE SCALE ANALYSIS] AT SER-278</scope>
    <scope>IDENTIFICATION BY MASS SPECTROMETRY [LARGE SCALE ANALYSIS]</scope>
</reference>
<feature type="chain" id="PRO_0000112515" description="Partitioning defective 6 homolog alpha">
    <location>
        <begin position="1"/>
        <end position="346"/>
    </location>
</feature>
<feature type="domain" description="PB1" evidence="5">
    <location>
        <begin position="15"/>
        <end position="95"/>
    </location>
</feature>
<feature type="domain" description="Pseudo-CRIB">
    <location>
        <begin position="133"/>
        <end position="150"/>
    </location>
</feature>
<feature type="domain" description="PDZ" evidence="4">
    <location>
        <begin position="157"/>
        <end position="250"/>
    </location>
</feature>
<feature type="region of interest" description="Interaction with PRKCI and PRKCZ" evidence="1">
    <location>
        <begin position="1"/>
        <end position="116"/>
    </location>
</feature>
<feature type="region of interest" description="Interaction with PARD3 and CDC42" evidence="1">
    <location>
        <begin position="126"/>
        <end position="253"/>
    </location>
</feature>
<feature type="region of interest" description="Disordered" evidence="6">
    <location>
        <begin position="257"/>
        <end position="294"/>
    </location>
</feature>
<feature type="region of interest" description="Disordered" evidence="6">
    <location>
        <begin position="317"/>
        <end position="346"/>
    </location>
</feature>
<feature type="compositionally biased region" description="Polar residues" evidence="6">
    <location>
        <begin position="317"/>
        <end position="332"/>
    </location>
</feature>
<feature type="modified residue" description="Phosphoserine" evidence="9">
    <location>
        <position position="278"/>
    </location>
</feature>
<feature type="modified residue" description="Phosphoserine" evidence="2">
    <location>
        <position position="345"/>
    </location>
</feature>
<feature type="splice variant" id="VSP_015768" description="In isoform 3." evidence="7">
    <location>
        <begin position="1"/>
        <end position="176"/>
    </location>
</feature>
<feature type="splice variant" id="VSP_015769" description="In isoform 2." evidence="7">
    <location>
        <position position="96"/>
    </location>
</feature>